<name>ANKR7_MACFA</name>
<feature type="chain" id="PRO_0000372587" description="Ankyrin repeat domain-containing protein 7">
    <location>
        <begin position="1"/>
        <end position="262"/>
    </location>
</feature>
<feature type="repeat" description="ANK 1">
    <location>
        <begin position="67"/>
        <end position="96"/>
    </location>
</feature>
<feature type="repeat" description="ANK 2">
    <location>
        <begin position="100"/>
        <end position="129"/>
    </location>
</feature>
<feature type="repeat" description="ANK 3">
    <location>
        <begin position="133"/>
        <end position="162"/>
    </location>
</feature>
<feature type="repeat" description="ANK 4">
    <location>
        <begin position="166"/>
        <end position="195"/>
    </location>
</feature>
<feature type="repeat" description="ANK 5">
    <location>
        <begin position="199"/>
        <end position="228"/>
    </location>
</feature>
<sequence length="262" mass="29827">MNKLFSFWKRKNETRSRTSSDPSIGQGYKLREKDLKKLHRAASVGDLKKLKEYLQLKKYDVNMQDKKYRTPLHLACANGHRDVVLFLIEQQCKINIRDSENKSPLIKAVQCQNEDCATILLNCGADPNLRDVRYNTALHYAVCGQSFSLVEQLLDYEADLEAKNKDGYTPLLVAVINNNPKMVKFLLEKGADVNASDNYQRTALILAVSGEPTRLVKLLLQQGVELSCRDICGFTAEEYAYFNGFTVYPQFTASHGRKKHVK</sequence>
<gene>
    <name type="primary">ANKRD7</name>
    <name type="synonym">QtsA-14614</name>
</gene>
<accession>Q4R3S3</accession>
<keyword id="KW-0040">ANK repeat</keyword>
<keyword id="KW-1185">Reference proteome</keyword>
<keyword id="KW-0677">Repeat</keyword>
<reference key="1">
    <citation type="submission" date="2005-06" db="EMBL/GenBank/DDBJ databases">
        <title>DNA sequences of macaque genes expressed in brain or testis and its evolutionary implications.</title>
        <authorList>
            <consortium name="International consortium for macaque cDNA sequencing and analysis"/>
        </authorList>
    </citation>
    <scope>NUCLEOTIDE SEQUENCE [LARGE SCALE MRNA]</scope>
    <source>
        <tissue>Testis</tissue>
    </source>
</reference>
<organism>
    <name type="scientific">Macaca fascicularis</name>
    <name type="common">Crab-eating macaque</name>
    <name type="synonym">Cynomolgus monkey</name>
    <dbReference type="NCBI Taxonomy" id="9541"/>
    <lineage>
        <taxon>Eukaryota</taxon>
        <taxon>Metazoa</taxon>
        <taxon>Chordata</taxon>
        <taxon>Craniata</taxon>
        <taxon>Vertebrata</taxon>
        <taxon>Euteleostomi</taxon>
        <taxon>Mammalia</taxon>
        <taxon>Eutheria</taxon>
        <taxon>Euarchontoglires</taxon>
        <taxon>Primates</taxon>
        <taxon>Haplorrhini</taxon>
        <taxon>Catarrhini</taxon>
        <taxon>Cercopithecidae</taxon>
        <taxon>Cercopithecinae</taxon>
        <taxon>Macaca</taxon>
    </lineage>
</organism>
<protein>
    <recommendedName>
        <fullName>Ankyrin repeat domain-containing protein 7</fullName>
    </recommendedName>
</protein>
<proteinExistence type="evidence at transcript level"/>
<dbReference type="EMBL" id="AB179192">
    <property type="protein sequence ID" value="BAE02243.1"/>
    <property type="molecule type" value="mRNA"/>
</dbReference>
<dbReference type="SMR" id="Q4R3S3"/>
<dbReference type="STRING" id="9541.ENSMFAP00000006601"/>
<dbReference type="eggNOG" id="KOG0504">
    <property type="taxonomic scope" value="Eukaryota"/>
</dbReference>
<dbReference type="Proteomes" id="UP000233100">
    <property type="component" value="Unplaced"/>
</dbReference>
<dbReference type="Gene3D" id="1.25.40.20">
    <property type="entry name" value="Ankyrin repeat-containing domain"/>
    <property type="match status" value="3"/>
</dbReference>
<dbReference type="InterPro" id="IPR050657">
    <property type="entry name" value="Ankyrin_repeat_domain"/>
</dbReference>
<dbReference type="InterPro" id="IPR002110">
    <property type="entry name" value="Ankyrin_rpt"/>
</dbReference>
<dbReference type="InterPro" id="IPR036770">
    <property type="entry name" value="Ankyrin_rpt-contain_sf"/>
</dbReference>
<dbReference type="PANTHER" id="PTHR24147">
    <property type="entry name" value="ANKYRIN REPEAT DOMAIN 36-RELATED"/>
    <property type="match status" value="1"/>
</dbReference>
<dbReference type="PANTHER" id="PTHR24147:SF62">
    <property type="entry name" value="ANKYRIN REPEAT DOMAIN-CONTAINING PROTEIN 7"/>
    <property type="match status" value="1"/>
</dbReference>
<dbReference type="Pfam" id="PF12796">
    <property type="entry name" value="Ank_2"/>
    <property type="match status" value="1"/>
</dbReference>
<dbReference type="Pfam" id="PF13857">
    <property type="entry name" value="Ank_5"/>
    <property type="match status" value="1"/>
</dbReference>
<dbReference type="PRINTS" id="PR01415">
    <property type="entry name" value="ANKYRIN"/>
</dbReference>
<dbReference type="SMART" id="SM00248">
    <property type="entry name" value="ANK"/>
    <property type="match status" value="5"/>
</dbReference>
<dbReference type="SUPFAM" id="SSF48403">
    <property type="entry name" value="Ankyrin repeat"/>
    <property type="match status" value="1"/>
</dbReference>
<dbReference type="PROSITE" id="PS50297">
    <property type="entry name" value="ANK_REP_REGION"/>
    <property type="match status" value="1"/>
</dbReference>
<dbReference type="PROSITE" id="PS50088">
    <property type="entry name" value="ANK_REPEAT"/>
    <property type="match status" value="5"/>
</dbReference>